<feature type="chain" id="PRO_0000217763" description="Circadian clock oscillator protein KaiB">
    <location>
        <begin position="1"/>
        <end position="119"/>
    </location>
</feature>
<comment type="function">
    <text evidence="1">Component of the KaiBC clock protein complex, which constitutes the main circadian regulator in cyanobacteria; it may modify the ATPase activity of KaiC.</text>
</comment>
<comment type="function">
    <text evidence="1">May be a metamorphic protein which reversibly switches between an inactive tetrameric fold and a rare, thioredoxin-like monomeric fold (KaiB(fs)). KaiB(fs) binds phospho-KaiC, and perhaps clock output effectors.</text>
</comment>
<comment type="subunit">
    <text evidence="1">May undergo a major conformational rearrangment; in the free state forms homooligomers. When bound to KaiC switches to a monomeric thioredoxin-fold (KaiB(fs)). The active oscillator complex is probably KaiC(6):KaiB(6).</text>
</comment>
<comment type="domain">
    <text evidence="1">Has 2 forms, fold switches to a thioredoxin-like fold (KaiB(fs)) when bound to KaiC.</text>
</comment>
<comment type="miscellaneous">
    <text evidence="1">The kiaA gene has been eliminated from Prochlorococcus during genome streamlining. It has been suggested that the central oscillator in Prochlorococcus does not have to be as robust as in other cyanobacteria because the former live in specific niches of the Earth's oceans; they divide exactly once a day and at the same time. Thus gene loss and changes in kaiB function compared to other cyanobacteria, can occur.</text>
</comment>
<comment type="similarity">
    <text evidence="1">Belongs to the KaiB family.</text>
</comment>
<protein>
    <recommendedName>
        <fullName evidence="1">Circadian clock oscillator protein KaiB</fullName>
    </recommendedName>
</protein>
<proteinExistence type="inferred from homology"/>
<sequence length="119" mass="13222">MSPRKTYILKLYVAGNTPNSMRALKTLRDILENEFRGVYALKVIDVLKNPQLAEADKILATPTLAKILPPPVRRIIGDLSDRERVLIGLDLLYDEISEEMLGSAELDTLADDDIASPDS</sequence>
<dbReference type="EMBL" id="BX548175">
    <property type="protein sequence ID" value="CAE21594.1"/>
    <property type="molecule type" value="Genomic_DNA"/>
</dbReference>
<dbReference type="RefSeq" id="WP_011130787.1">
    <property type="nucleotide sequence ID" value="NC_005071.1"/>
</dbReference>
<dbReference type="SMR" id="Q7V5W6"/>
<dbReference type="KEGG" id="pmt:PMT_1419"/>
<dbReference type="eggNOG" id="COG4251">
    <property type="taxonomic scope" value="Bacteria"/>
</dbReference>
<dbReference type="HOGENOM" id="CLU_144073_0_0_3"/>
<dbReference type="OrthoDB" id="5458519at2"/>
<dbReference type="Proteomes" id="UP000001423">
    <property type="component" value="Chromosome"/>
</dbReference>
<dbReference type="GO" id="GO:0007623">
    <property type="term" value="P:circadian rhythm"/>
    <property type="evidence" value="ECO:0007669"/>
    <property type="project" value="UniProtKB-UniRule"/>
</dbReference>
<dbReference type="CDD" id="cd02978">
    <property type="entry name" value="KaiB_like"/>
    <property type="match status" value="1"/>
</dbReference>
<dbReference type="Gene3D" id="3.40.30.10">
    <property type="entry name" value="Glutaredoxin"/>
    <property type="match status" value="1"/>
</dbReference>
<dbReference type="HAMAP" id="MF_01835">
    <property type="entry name" value="KaiB"/>
    <property type="match status" value="1"/>
</dbReference>
<dbReference type="InterPro" id="IPR013474">
    <property type="entry name" value="Circ_KaiB"/>
</dbReference>
<dbReference type="InterPro" id="IPR039022">
    <property type="entry name" value="KaiB-like"/>
</dbReference>
<dbReference type="InterPro" id="IPR011649">
    <property type="entry name" value="KaiB_domain"/>
</dbReference>
<dbReference type="InterPro" id="IPR036249">
    <property type="entry name" value="Thioredoxin-like_sf"/>
</dbReference>
<dbReference type="NCBIfam" id="TIGR02654">
    <property type="entry name" value="circ_KaiB"/>
    <property type="match status" value="1"/>
</dbReference>
<dbReference type="NCBIfam" id="NF006798">
    <property type="entry name" value="PRK09301.1"/>
    <property type="match status" value="1"/>
</dbReference>
<dbReference type="PANTHER" id="PTHR41709:SF2">
    <property type="entry name" value="CIRCADIAN CLOCK PROTEIN KAIB2"/>
    <property type="match status" value="1"/>
</dbReference>
<dbReference type="PANTHER" id="PTHR41709">
    <property type="entry name" value="KAIB-LIKE PROTEIN 1"/>
    <property type="match status" value="1"/>
</dbReference>
<dbReference type="Pfam" id="PF07689">
    <property type="entry name" value="KaiB"/>
    <property type="match status" value="1"/>
</dbReference>
<dbReference type="SMART" id="SM01248">
    <property type="entry name" value="KaiB"/>
    <property type="match status" value="1"/>
</dbReference>
<dbReference type="SUPFAM" id="SSF52833">
    <property type="entry name" value="Thioredoxin-like"/>
    <property type="match status" value="1"/>
</dbReference>
<organism>
    <name type="scientific">Prochlorococcus marinus (strain MIT 9313)</name>
    <dbReference type="NCBI Taxonomy" id="74547"/>
    <lineage>
        <taxon>Bacteria</taxon>
        <taxon>Bacillati</taxon>
        <taxon>Cyanobacteriota</taxon>
        <taxon>Cyanophyceae</taxon>
        <taxon>Synechococcales</taxon>
        <taxon>Prochlorococcaceae</taxon>
        <taxon>Prochlorococcus</taxon>
    </lineage>
</organism>
<name>KAIB_PROMM</name>
<accession>Q7V5W6</accession>
<evidence type="ECO:0000255" key="1">
    <source>
        <dbReference type="HAMAP-Rule" id="MF_01835"/>
    </source>
</evidence>
<keyword id="KW-0090">Biological rhythms</keyword>
<keyword id="KW-1185">Reference proteome</keyword>
<gene>
    <name evidence="1" type="primary">kaiB</name>
    <name type="ordered locus">PMT_1419</name>
</gene>
<reference key="1">
    <citation type="journal article" date="2003" name="Nature">
        <title>Genome divergence in two Prochlorococcus ecotypes reflects oceanic niche differentiation.</title>
        <authorList>
            <person name="Rocap G."/>
            <person name="Larimer F.W."/>
            <person name="Lamerdin J.E."/>
            <person name="Malfatti S."/>
            <person name="Chain P."/>
            <person name="Ahlgren N.A."/>
            <person name="Arellano A."/>
            <person name="Coleman M."/>
            <person name="Hauser L."/>
            <person name="Hess W.R."/>
            <person name="Johnson Z.I."/>
            <person name="Land M.L."/>
            <person name="Lindell D."/>
            <person name="Post A.F."/>
            <person name="Regala W."/>
            <person name="Shah M."/>
            <person name="Shaw S.L."/>
            <person name="Steglich C."/>
            <person name="Sullivan M.B."/>
            <person name="Ting C.S."/>
            <person name="Tolonen A."/>
            <person name="Webb E.A."/>
            <person name="Zinser E.R."/>
            <person name="Chisholm S.W."/>
        </authorList>
    </citation>
    <scope>NUCLEOTIDE SEQUENCE [LARGE SCALE GENOMIC DNA]</scope>
    <source>
        <strain>MIT 9313</strain>
    </source>
</reference>